<sequence>MQINSSWQERFLADPPREKDHRPPFRRDRGRILHSAAFRCLQAKTQIHAIGENDFYRTRLTHSLEVAQIGSSIVAQMKLIDSFIYLAQQLKEDRADLQKQLKLILPSNDLIESLCFAHDIGHPPFGHGGEVALNYMMRHHGGFEGNAQTFRLLTKLEPYTPNAGMNLTRRTLLGVVKYPTILDRSSPQYHQGVIVDNVDSKYVKISAWKPGKGIFRDDLKMFEWLLEPLSENDRTLFGQYKKERTRPDEVLKTRYKSLDCSIMELADDIAYAVHDLEDAIVVGVVTFQQWQSAVEKLAECRSEWIVQTISSLSQKLFSELHYERKNAIGALVNYFITHVRWKINNGFSEPLLRYNAELPDEVIEVLNIFKRFVWEYVIKHVDTQRVEYKGQRMLTEMFQIFDSDPLRLLPRNTAMRWQKATETDRKRIICDYIAGMSDAYALRVYQQL</sequence>
<protein>
    <recommendedName>
        <fullName evidence="1">Deoxyguanosinetriphosphate triphosphohydrolase-like protein</fullName>
    </recommendedName>
</protein>
<keyword id="KW-0378">Hydrolase</keyword>
<evidence type="ECO:0000255" key="1">
    <source>
        <dbReference type="HAMAP-Rule" id="MF_01212"/>
    </source>
</evidence>
<evidence type="ECO:0000255" key="2">
    <source>
        <dbReference type="PROSITE-ProRule" id="PRU01175"/>
    </source>
</evidence>
<evidence type="ECO:0000256" key="3">
    <source>
        <dbReference type="SAM" id="MobiDB-lite"/>
    </source>
</evidence>
<name>DGTL1_HISS1</name>
<gene>
    <name type="ordered locus">HS_0964</name>
</gene>
<accession>Q0I3A1</accession>
<dbReference type="EMBL" id="CP000436">
    <property type="protein sequence ID" value="ABI25239.1"/>
    <property type="molecule type" value="Genomic_DNA"/>
</dbReference>
<dbReference type="SMR" id="Q0I3A1"/>
<dbReference type="KEGG" id="hso:HS_0964"/>
<dbReference type="eggNOG" id="COG0232">
    <property type="taxonomic scope" value="Bacteria"/>
</dbReference>
<dbReference type="HOGENOM" id="CLU_028163_0_0_6"/>
<dbReference type="GO" id="GO:0008832">
    <property type="term" value="F:dGTPase activity"/>
    <property type="evidence" value="ECO:0007669"/>
    <property type="project" value="TreeGrafter"/>
</dbReference>
<dbReference type="GO" id="GO:0006203">
    <property type="term" value="P:dGTP catabolic process"/>
    <property type="evidence" value="ECO:0007669"/>
    <property type="project" value="TreeGrafter"/>
</dbReference>
<dbReference type="CDD" id="cd00077">
    <property type="entry name" value="HDc"/>
    <property type="match status" value="1"/>
</dbReference>
<dbReference type="Gene3D" id="1.10.3210.10">
    <property type="entry name" value="Hypothetical protein af1432"/>
    <property type="match status" value="2"/>
</dbReference>
<dbReference type="HAMAP" id="MF_01212">
    <property type="entry name" value="dGTPase_type2"/>
    <property type="match status" value="1"/>
</dbReference>
<dbReference type="InterPro" id="IPR006261">
    <property type="entry name" value="dGTPase"/>
</dbReference>
<dbReference type="InterPro" id="IPR050135">
    <property type="entry name" value="dGTPase-like"/>
</dbReference>
<dbReference type="InterPro" id="IPR023023">
    <property type="entry name" value="dNTPase_2"/>
</dbReference>
<dbReference type="InterPro" id="IPR003607">
    <property type="entry name" value="HD/PDEase_dom"/>
</dbReference>
<dbReference type="InterPro" id="IPR006674">
    <property type="entry name" value="HD_domain"/>
</dbReference>
<dbReference type="InterPro" id="IPR026875">
    <property type="entry name" value="PHydrolase_assoc_dom"/>
</dbReference>
<dbReference type="NCBIfam" id="NF041026">
    <property type="entry name" value="antiphage_dGTPase"/>
    <property type="match status" value="1"/>
</dbReference>
<dbReference type="NCBIfam" id="TIGR01353">
    <property type="entry name" value="dGTP_triPase"/>
    <property type="match status" value="1"/>
</dbReference>
<dbReference type="NCBIfam" id="NF003701">
    <property type="entry name" value="PRK05318.1"/>
    <property type="match status" value="1"/>
</dbReference>
<dbReference type="PANTHER" id="PTHR11373:SF40">
    <property type="entry name" value="DEOXYGUANOSINETRIPHOSPHATE TRIPHOSPHOHYDROLASE-LIKE PROTEIN 2"/>
    <property type="match status" value="1"/>
</dbReference>
<dbReference type="PANTHER" id="PTHR11373">
    <property type="entry name" value="DEOXYNUCLEOSIDE TRIPHOSPHATE TRIPHOSPHOHYDROLASE"/>
    <property type="match status" value="1"/>
</dbReference>
<dbReference type="Pfam" id="PF01966">
    <property type="entry name" value="HD"/>
    <property type="match status" value="1"/>
</dbReference>
<dbReference type="Pfam" id="PF13286">
    <property type="entry name" value="HD_assoc"/>
    <property type="match status" value="1"/>
</dbReference>
<dbReference type="SMART" id="SM00471">
    <property type="entry name" value="HDc"/>
    <property type="match status" value="1"/>
</dbReference>
<dbReference type="SUPFAM" id="SSF109604">
    <property type="entry name" value="HD-domain/PDEase-like"/>
    <property type="match status" value="1"/>
</dbReference>
<dbReference type="PROSITE" id="PS51831">
    <property type="entry name" value="HD"/>
    <property type="match status" value="1"/>
</dbReference>
<proteinExistence type="inferred from homology"/>
<reference key="1">
    <citation type="journal article" date="2007" name="J. Bacteriol.">
        <title>Complete genome sequence of Haemophilus somnus (Histophilus somni) strain 129Pt and comparison to Haemophilus ducreyi 35000HP and Haemophilus influenzae Rd.</title>
        <authorList>
            <person name="Challacombe J.F."/>
            <person name="Duncan A.J."/>
            <person name="Brettin T.S."/>
            <person name="Bruce D."/>
            <person name="Chertkov O."/>
            <person name="Detter J.C."/>
            <person name="Han C.S."/>
            <person name="Misra M."/>
            <person name="Richardson P."/>
            <person name="Tapia R."/>
            <person name="Thayer N."/>
            <person name="Xie G."/>
            <person name="Inzana T.J."/>
        </authorList>
    </citation>
    <scope>NUCLEOTIDE SEQUENCE [LARGE SCALE GENOMIC DNA]</scope>
    <source>
        <strain>129Pt</strain>
    </source>
</reference>
<feature type="chain" id="PRO_1000138920" description="Deoxyguanosinetriphosphate triphosphohydrolase-like protein">
    <location>
        <begin position="1"/>
        <end position="448"/>
    </location>
</feature>
<feature type="domain" description="HD" evidence="2">
    <location>
        <begin position="59"/>
        <end position="272"/>
    </location>
</feature>
<feature type="region of interest" description="Disordered" evidence="3">
    <location>
        <begin position="1"/>
        <end position="26"/>
    </location>
</feature>
<feature type="compositionally biased region" description="Basic and acidic residues" evidence="3">
    <location>
        <begin position="11"/>
        <end position="26"/>
    </location>
</feature>
<organism>
    <name type="scientific">Histophilus somni (strain 129Pt)</name>
    <name type="common">Haemophilus somnus</name>
    <dbReference type="NCBI Taxonomy" id="205914"/>
    <lineage>
        <taxon>Bacteria</taxon>
        <taxon>Pseudomonadati</taxon>
        <taxon>Pseudomonadota</taxon>
        <taxon>Gammaproteobacteria</taxon>
        <taxon>Pasteurellales</taxon>
        <taxon>Pasteurellaceae</taxon>
        <taxon>Histophilus</taxon>
    </lineage>
</organism>
<comment type="similarity">
    <text evidence="1">Belongs to the dGTPase family. Type 2 subfamily.</text>
</comment>